<organism>
    <name type="scientific">Acetobacter pasteurianus (strain NBRC 105184 / IFO 3283-01)</name>
    <dbReference type="NCBI Taxonomy" id="634452"/>
    <lineage>
        <taxon>Bacteria</taxon>
        <taxon>Pseudomonadati</taxon>
        <taxon>Pseudomonadota</taxon>
        <taxon>Alphaproteobacteria</taxon>
        <taxon>Acetobacterales</taxon>
        <taxon>Acetobacteraceae</taxon>
        <taxon>Acetobacter</taxon>
    </lineage>
</organism>
<reference key="1">
    <citation type="journal article" date="2009" name="Nucleic Acids Res.">
        <title>Whole-genome analyses reveal genetic instability of Acetobacter pasteurianus.</title>
        <authorList>
            <person name="Azuma Y."/>
            <person name="Hosoyama A."/>
            <person name="Matsutani M."/>
            <person name="Furuya N."/>
            <person name="Horikawa H."/>
            <person name="Harada T."/>
            <person name="Hirakawa H."/>
            <person name="Kuhara S."/>
            <person name="Matsushita K."/>
            <person name="Fujita N."/>
            <person name="Shirai M."/>
        </authorList>
    </citation>
    <scope>NUCLEOTIDE SEQUENCE [LARGE SCALE GENOMIC DNA]</scope>
    <source>
        <strain>NBRC 105184 / IFO 3283-01</strain>
    </source>
</reference>
<evidence type="ECO:0000255" key="1">
    <source>
        <dbReference type="HAMAP-Rule" id="MF_01463"/>
    </source>
</evidence>
<keyword id="KW-0997">Cell inner membrane</keyword>
<keyword id="KW-1003">Cell membrane</keyword>
<keyword id="KW-0472">Membrane</keyword>
<keyword id="KW-0653">Protein transport</keyword>
<keyword id="KW-0811">Translocation</keyword>
<keyword id="KW-0812">Transmembrane</keyword>
<keyword id="KW-1133">Transmembrane helix</keyword>
<keyword id="KW-0813">Transport</keyword>
<protein>
    <recommendedName>
        <fullName evidence="1">Protein translocase subunit SecD</fullName>
    </recommendedName>
</protein>
<accession>C7JGJ8</accession>
<dbReference type="EMBL" id="AP011121">
    <property type="protein sequence ID" value="BAH99207.1"/>
    <property type="molecule type" value="Genomic_DNA"/>
</dbReference>
<dbReference type="SMR" id="C7JGJ8"/>
<dbReference type="STRING" id="634452.APA01_10580"/>
<dbReference type="KEGG" id="apt:APA01_10580"/>
<dbReference type="eggNOG" id="COG0342">
    <property type="taxonomic scope" value="Bacteria"/>
</dbReference>
<dbReference type="HOGENOM" id="CLU_007894_4_3_5"/>
<dbReference type="Proteomes" id="UP000000948">
    <property type="component" value="Chromosome"/>
</dbReference>
<dbReference type="GO" id="GO:0005886">
    <property type="term" value="C:plasma membrane"/>
    <property type="evidence" value="ECO:0007669"/>
    <property type="project" value="UniProtKB-SubCell"/>
</dbReference>
<dbReference type="GO" id="GO:0015450">
    <property type="term" value="F:protein-transporting ATPase activity"/>
    <property type="evidence" value="ECO:0007669"/>
    <property type="project" value="InterPro"/>
</dbReference>
<dbReference type="GO" id="GO:0065002">
    <property type="term" value="P:intracellular protein transmembrane transport"/>
    <property type="evidence" value="ECO:0007669"/>
    <property type="project" value="UniProtKB-UniRule"/>
</dbReference>
<dbReference type="GO" id="GO:0006605">
    <property type="term" value="P:protein targeting"/>
    <property type="evidence" value="ECO:0007669"/>
    <property type="project" value="UniProtKB-UniRule"/>
</dbReference>
<dbReference type="GO" id="GO:0043952">
    <property type="term" value="P:protein transport by the Sec complex"/>
    <property type="evidence" value="ECO:0007669"/>
    <property type="project" value="UniProtKB-UniRule"/>
</dbReference>
<dbReference type="FunFam" id="1.20.1640.10:FF:000004">
    <property type="entry name" value="Protein translocase subunit SecD"/>
    <property type="match status" value="1"/>
</dbReference>
<dbReference type="Gene3D" id="3.30.1360.200">
    <property type="match status" value="1"/>
</dbReference>
<dbReference type="Gene3D" id="3.30.70.3400">
    <property type="match status" value="2"/>
</dbReference>
<dbReference type="Gene3D" id="1.20.1640.10">
    <property type="entry name" value="Multidrug efflux transporter AcrB transmembrane domain"/>
    <property type="match status" value="1"/>
</dbReference>
<dbReference type="HAMAP" id="MF_01463_B">
    <property type="entry name" value="SecD_B"/>
    <property type="match status" value="1"/>
</dbReference>
<dbReference type="InterPro" id="IPR005791">
    <property type="entry name" value="SecD"/>
</dbReference>
<dbReference type="InterPro" id="IPR022813">
    <property type="entry name" value="SecD/SecF_arch_bac"/>
</dbReference>
<dbReference type="InterPro" id="IPR048631">
    <property type="entry name" value="SecD_1st"/>
</dbReference>
<dbReference type="InterPro" id="IPR048634">
    <property type="entry name" value="SecD_SecF_C"/>
</dbReference>
<dbReference type="InterPro" id="IPR055344">
    <property type="entry name" value="SecD_SecF_C_bact"/>
</dbReference>
<dbReference type="InterPro" id="IPR054384">
    <property type="entry name" value="SecDF_P1_head"/>
</dbReference>
<dbReference type="NCBIfam" id="TIGR00916">
    <property type="entry name" value="2A0604s01"/>
    <property type="match status" value="1"/>
</dbReference>
<dbReference type="NCBIfam" id="TIGR01129">
    <property type="entry name" value="secD"/>
    <property type="match status" value="1"/>
</dbReference>
<dbReference type="PANTHER" id="PTHR30081:SF1">
    <property type="entry name" value="PROTEIN TRANSLOCASE SUBUNIT SECD"/>
    <property type="match status" value="1"/>
</dbReference>
<dbReference type="PANTHER" id="PTHR30081">
    <property type="entry name" value="PROTEIN-EXPORT MEMBRANE PROTEIN SEC"/>
    <property type="match status" value="1"/>
</dbReference>
<dbReference type="Pfam" id="PF21760">
    <property type="entry name" value="SecD_1st"/>
    <property type="match status" value="1"/>
</dbReference>
<dbReference type="Pfam" id="PF02355">
    <property type="entry name" value="SecD_SecF_C"/>
    <property type="match status" value="1"/>
</dbReference>
<dbReference type="Pfam" id="PF22599">
    <property type="entry name" value="SecDF_P1_head"/>
    <property type="match status" value="1"/>
</dbReference>
<dbReference type="SUPFAM" id="SSF82866">
    <property type="entry name" value="Multidrug efflux transporter AcrB transmembrane domain"/>
    <property type="match status" value="1"/>
</dbReference>
<gene>
    <name evidence="1" type="primary">secD</name>
    <name type="ordered locus">APA01_10580</name>
</gene>
<comment type="function">
    <text evidence="1">Part of the Sec protein translocase complex. Interacts with the SecYEG preprotein conducting channel. SecDF uses the proton motive force (PMF) to complete protein translocation after the ATP-dependent function of SecA.</text>
</comment>
<comment type="subunit">
    <text evidence="1">Forms a complex with SecF. Part of the essential Sec protein translocation apparatus which comprises SecA, SecYEG and auxiliary proteins SecDF-YajC and YidC.</text>
</comment>
<comment type="subcellular location">
    <subcellularLocation>
        <location evidence="1">Cell inner membrane</location>
        <topology evidence="1">Multi-pass membrane protein</topology>
    </subcellularLocation>
</comment>
<comment type="similarity">
    <text evidence="1">Belongs to the SecD/SecF family. SecD subfamily.</text>
</comment>
<proteinExistence type="inferred from homology"/>
<name>SECD_ACEP3</name>
<feature type="chain" id="PRO_0000412670" description="Protein translocase subunit SecD">
    <location>
        <begin position="1"/>
        <end position="521"/>
    </location>
</feature>
<feature type="transmembrane region" description="Helical" evidence="1">
    <location>
        <begin position="8"/>
        <end position="28"/>
    </location>
</feature>
<feature type="transmembrane region" description="Helical" evidence="1">
    <location>
        <begin position="359"/>
        <end position="379"/>
    </location>
</feature>
<feature type="transmembrane region" description="Helical" evidence="1">
    <location>
        <begin position="388"/>
        <end position="408"/>
    </location>
</feature>
<feature type="transmembrane region" description="Helical" evidence="1">
    <location>
        <begin position="410"/>
        <end position="430"/>
    </location>
</feature>
<feature type="transmembrane region" description="Helical" evidence="1">
    <location>
        <begin position="459"/>
        <end position="479"/>
    </location>
</feature>
<feature type="transmembrane region" description="Helical" evidence="1">
    <location>
        <begin position="483"/>
        <end position="503"/>
    </location>
</feature>
<sequence length="521" mass="56125">MRMYYSRLKLASVLGVCLLGLLLCLPNGMRKPFPSIPWRQIHLGLDLRGGSYLLMQVDLKSLTHDRLQTLAENTRDTLLKSQLGYQNINVDADKNTVSFQPRDAAEADTDVATLDKLPRVVPNEFSVKKQDDGTIALVLSADAIKARAREAVTQSIEIVRRRIDGTGAVDPEITRQGDDRIVVELPGISDPERIKALLGTTAKMTFRLVDSNPLHATYPPPGVSLVPMANPAEGGPLPVFDHVDVDGTDLTNAGAVIDQQTGEWAVSFSFDSVGTRAFSSVTQTNVGKRFAIVLDNKVIEAPVIRTPITGGNGQITGGFDAQKATDLALMLRAGALPAPLSVVEQRSIGPSLGADSIRAGILSLGVGFLLVVVFMVLFYGRFGWYADIALLANLVLMVAILSLFEATLTLPGMAGMLLTLGMAVDANILINERIREEVARGRTPLAAMQTGFERATSTIVDSNATAFLAHVMLFVFGTGPVRGFALTITIGIATTLFTTLLLSRMLMARWYARTRPASLPV</sequence>